<organism>
    <name type="scientific">Pan troglodytes</name>
    <name type="common">Chimpanzee</name>
    <dbReference type="NCBI Taxonomy" id="9598"/>
    <lineage>
        <taxon>Eukaryota</taxon>
        <taxon>Metazoa</taxon>
        <taxon>Chordata</taxon>
        <taxon>Craniata</taxon>
        <taxon>Vertebrata</taxon>
        <taxon>Euteleostomi</taxon>
        <taxon>Mammalia</taxon>
        <taxon>Eutheria</taxon>
        <taxon>Euarchontoglires</taxon>
        <taxon>Primates</taxon>
        <taxon>Haplorrhini</taxon>
        <taxon>Catarrhini</taxon>
        <taxon>Hominidae</taxon>
        <taxon>Pan</taxon>
    </lineage>
</organism>
<proteinExistence type="evidence at protein level"/>
<accession>P99998</accession>
<accession>P00001</accession>
<accession>Q96BV4</accession>
<reference key="1">
    <citation type="journal article" date="2003" name="Proc. Natl. Acad. Sci. U.S.A.">
        <title>Implications of natural selection in shaping 99.4% nonsynonymous DNA identity between humans and chimpanzees: enlarging genus Homo.</title>
        <authorList>
            <person name="Wildman D.E."/>
            <person name="Uddin M."/>
            <person name="Liu G."/>
            <person name="Grossman L.I."/>
            <person name="Goodman M."/>
        </authorList>
    </citation>
    <scope>NUCLEOTIDE SEQUENCE [GENOMIC DNA]</scope>
</reference>
<reference key="2">
    <citation type="journal article" date="1968" name="Ann. N. Y. Acad. Sci.">
        <title>Evolutionary variability of cytochrome c primary structures.</title>
        <authorList>
            <person name="Margoliash E."/>
            <person name="Fitch W.M."/>
        </authorList>
    </citation>
    <scope>PROTEIN SEQUENCE OF 2-105</scope>
</reference>
<keyword id="KW-0007">Acetylation</keyword>
<keyword id="KW-0053">Apoptosis</keyword>
<keyword id="KW-0903">Direct protein sequencing</keyword>
<keyword id="KW-0249">Electron transport</keyword>
<keyword id="KW-0349">Heme</keyword>
<keyword id="KW-0408">Iron</keyword>
<keyword id="KW-0479">Metal-binding</keyword>
<keyword id="KW-0496">Mitochondrion</keyword>
<keyword id="KW-0597">Phosphoprotein</keyword>
<keyword id="KW-1185">Reference proteome</keyword>
<keyword id="KW-0679">Respiratory chain</keyword>
<keyword id="KW-0813">Transport</keyword>
<dbReference type="EMBL" id="AY268594">
    <property type="protein sequence ID" value="AAP49489.1"/>
    <property type="molecule type" value="Genomic_DNA"/>
</dbReference>
<dbReference type="PIR" id="A00002">
    <property type="entry name" value="CCCZ"/>
</dbReference>
<dbReference type="RefSeq" id="NP_001065289.1">
    <property type="nucleotide sequence ID" value="NM_001071821.1"/>
</dbReference>
<dbReference type="RefSeq" id="XP_001140708.1">
    <property type="nucleotide sequence ID" value="XM_001140708.5"/>
</dbReference>
<dbReference type="RefSeq" id="XP_009450812.1">
    <property type="nucleotide sequence ID" value="XM_009452537.5"/>
</dbReference>
<dbReference type="RefSeq" id="XP_016802858.1">
    <property type="nucleotide sequence ID" value="XM_016947369.1"/>
</dbReference>
<dbReference type="RefSeq" id="XP_016812394.1">
    <property type="nucleotide sequence ID" value="XM_016956905.4"/>
</dbReference>
<dbReference type="BMRB" id="P99998"/>
<dbReference type="SMR" id="P99998"/>
<dbReference type="FunCoup" id="P99998">
    <property type="interactions" value="2473"/>
</dbReference>
<dbReference type="MINT" id="P99998"/>
<dbReference type="STRING" id="9598.ENSPTRP00000032465"/>
<dbReference type="PaxDb" id="9598-ENSPTRP00000032465"/>
<dbReference type="Ensembl" id="ENSPTRT00000035122.4">
    <property type="protein sequence ID" value="ENSPTRP00000032465.3"/>
    <property type="gene ID" value="ENSPTRG00000018996.4"/>
</dbReference>
<dbReference type="Ensembl" id="ENSPTRT00000077588.1">
    <property type="protein sequence ID" value="ENSPTRP00000063547.1"/>
    <property type="gene ID" value="ENSPTRG00000043922.1"/>
</dbReference>
<dbReference type="GeneID" id="744779"/>
<dbReference type="KEGG" id="ptr:744779"/>
<dbReference type="CTD" id="54205"/>
<dbReference type="VGNC" id="VGNC:14767">
    <property type="gene designation" value="CYCS"/>
</dbReference>
<dbReference type="eggNOG" id="KOG3453">
    <property type="taxonomic scope" value="Eukaryota"/>
</dbReference>
<dbReference type="GeneTree" id="ENSGT00390000009405"/>
<dbReference type="HOGENOM" id="CLU_060944_3_0_1"/>
<dbReference type="InParanoid" id="P99998"/>
<dbReference type="OMA" id="KARCAQC"/>
<dbReference type="OrthoDB" id="564at9604"/>
<dbReference type="TreeFam" id="TF300226"/>
<dbReference type="Proteomes" id="UP000002277">
    <property type="component" value="Chromosome 7"/>
</dbReference>
<dbReference type="Bgee" id="ENSPTRG00000018996">
    <property type="expression patterns" value="Expressed in heart and 21 other cell types or tissues"/>
</dbReference>
<dbReference type="GO" id="GO:0005829">
    <property type="term" value="C:cytosol"/>
    <property type="evidence" value="ECO:0000250"/>
    <property type="project" value="UniProtKB"/>
</dbReference>
<dbReference type="GO" id="GO:0005758">
    <property type="term" value="C:mitochondrial intermembrane space"/>
    <property type="evidence" value="ECO:0000318"/>
    <property type="project" value="GO_Central"/>
</dbReference>
<dbReference type="GO" id="GO:0009055">
    <property type="term" value="F:electron transfer activity"/>
    <property type="evidence" value="ECO:0000318"/>
    <property type="project" value="GO_Central"/>
</dbReference>
<dbReference type="GO" id="GO:0020037">
    <property type="term" value="F:heme binding"/>
    <property type="evidence" value="ECO:0007669"/>
    <property type="project" value="InterPro"/>
</dbReference>
<dbReference type="GO" id="GO:0046872">
    <property type="term" value="F:metal ion binding"/>
    <property type="evidence" value="ECO:0007669"/>
    <property type="project" value="UniProtKB-KW"/>
</dbReference>
<dbReference type="GO" id="GO:0006915">
    <property type="term" value="P:apoptotic process"/>
    <property type="evidence" value="ECO:0007669"/>
    <property type="project" value="UniProtKB-KW"/>
</dbReference>
<dbReference type="GO" id="GO:0006123">
    <property type="term" value="P:mitochondrial electron transport, cytochrome c to oxygen"/>
    <property type="evidence" value="ECO:0000318"/>
    <property type="project" value="GO_Central"/>
</dbReference>
<dbReference type="GO" id="GO:0006122">
    <property type="term" value="P:mitochondrial electron transport, ubiquinol to cytochrome c"/>
    <property type="evidence" value="ECO:0000318"/>
    <property type="project" value="GO_Central"/>
</dbReference>
<dbReference type="FunFam" id="1.10.760.10:FF:000008">
    <property type="entry name" value="Cytochrome c"/>
    <property type="match status" value="1"/>
</dbReference>
<dbReference type="Gene3D" id="1.10.760.10">
    <property type="entry name" value="Cytochrome c-like domain"/>
    <property type="match status" value="1"/>
</dbReference>
<dbReference type="InterPro" id="IPR009056">
    <property type="entry name" value="Cyt_c-like_dom"/>
</dbReference>
<dbReference type="InterPro" id="IPR036909">
    <property type="entry name" value="Cyt_c-like_dom_sf"/>
</dbReference>
<dbReference type="InterPro" id="IPR002327">
    <property type="entry name" value="Cyt_c_1A/1B"/>
</dbReference>
<dbReference type="PANTHER" id="PTHR11961">
    <property type="entry name" value="CYTOCHROME C"/>
    <property type="match status" value="1"/>
</dbReference>
<dbReference type="Pfam" id="PF00034">
    <property type="entry name" value="Cytochrom_C"/>
    <property type="match status" value="1"/>
</dbReference>
<dbReference type="PRINTS" id="PR00604">
    <property type="entry name" value="CYTCHRMECIAB"/>
</dbReference>
<dbReference type="SUPFAM" id="SSF46626">
    <property type="entry name" value="Cytochrome c"/>
    <property type="match status" value="1"/>
</dbReference>
<dbReference type="PROSITE" id="PS51007">
    <property type="entry name" value="CYTC"/>
    <property type="match status" value="1"/>
</dbReference>
<comment type="function">
    <text evidence="1">Electron carrier protein. The oxidized form of the cytochrome c heme group can accept an electron from the heme group of the cytochrome c1 subunit of cytochrome reductase. Cytochrome c then transfers this electron to the cytochrome oxidase complex, the final protein carrier in the mitochondrial electron-transport chain (By similarity).</text>
</comment>
<comment type="function">
    <text evidence="1">Plays a role in apoptosis. Suppression of the anti-apoptotic members or activation of the pro-apoptotic members of the Bcl-2 family leads to altered mitochondrial membrane permeability resulting in release of cytochrome c into the cytosol. Binding of cytochrome c to Apaf-1 triggers the activation of caspase-9, which then accelerates apoptosis by activating other caspases (By similarity).</text>
</comment>
<comment type="subcellular location">
    <subcellularLocation>
        <location>Mitochondrion intermembrane space</location>
    </subcellularLocation>
    <text>Loosely associated with the inner membrane.</text>
</comment>
<comment type="PTM">
    <text>Binds 1 heme c group covalently per subunit.</text>
</comment>
<comment type="PTM">
    <text evidence="1">Phosphorylation at Tyr-49 and Tyr-98 both reduce by half the turnover in the reaction with cytochrome c oxidase, down-regulating mitochondrial respiration.</text>
</comment>
<comment type="similarity">
    <text evidence="5">Belongs to the cytochrome c family.</text>
</comment>
<comment type="online information" name="Protein Spotlight">
    <link uri="https://www.proteinspotlight.org/back_issues/076"/>
    <text>Life shuttle - Issue 76 of November 2006</text>
</comment>
<name>CYC_PANTR</name>
<gene>
    <name type="primary">CYCS</name>
    <name type="synonym">CYC</name>
</gene>
<feature type="initiator methionine" description="Removed" evidence="2 4">
    <location>
        <position position="1"/>
    </location>
</feature>
<feature type="chain" id="PRO_0000108227" description="Cytochrome c">
    <location>
        <begin position="2"/>
        <end position="105"/>
    </location>
</feature>
<feature type="binding site" description="covalent">
    <location>
        <position position="15"/>
    </location>
    <ligand>
        <name>heme c</name>
        <dbReference type="ChEBI" id="CHEBI:61717"/>
    </ligand>
</feature>
<feature type="binding site" description="covalent">
    <location>
        <position position="18"/>
    </location>
    <ligand>
        <name>heme c</name>
        <dbReference type="ChEBI" id="CHEBI:61717"/>
    </ligand>
</feature>
<feature type="binding site" description="axial binding residue">
    <location>
        <position position="19"/>
    </location>
    <ligand>
        <name>heme c</name>
        <dbReference type="ChEBI" id="CHEBI:61717"/>
    </ligand>
    <ligandPart>
        <name>Fe</name>
        <dbReference type="ChEBI" id="CHEBI:18248"/>
    </ligandPart>
</feature>
<feature type="binding site" description="axial binding residue">
    <location>
        <position position="81"/>
    </location>
    <ligand>
        <name>heme c</name>
        <dbReference type="ChEBI" id="CHEBI:61717"/>
    </ligand>
    <ligandPart>
        <name>Fe</name>
        <dbReference type="ChEBI" id="CHEBI:18248"/>
    </ligandPart>
</feature>
<feature type="modified residue" description="N-acetylglycine" evidence="2">
    <location>
        <position position="2"/>
    </location>
</feature>
<feature type="modified residue" description="Phosphotyrosine" evidence="2">
    <location>
        <position position="49"/>
    </location>
</feature>
<feature type="modified residue" description="N6-succinyllysine" evidence="3">
    <location>
        <position position="56"/>
    </location>
</feature>
<feature type="modified residue" description="N6-acetyllysine; alternate" evidence="3">
    <location>
        <position position="73"/>
    </location>
</feature>
<feature type="modified residue" description="N6-succinyllysine; alternate" evidence="3">
    <location>
        <position position="73"/>
    </location>
</feature>
<feature type="modified residue" description="Phosphotyrosine" evidence="2">
    <location>
        <position position="98"/>
    </location>
</feature>
<feature type="modified residue" description="N6-acetyllysine" evidence="3">
    <location>
        <position position="100"/>
    </location>
</feature>
<evidence type="ECO:0000250" key="1"/>
<evidence type="ECO:0000250" key="2">
    <source>
        <dbReference type="UniProtKB" id="P62894"/>
    </source>
</evidence>
<evidence type="ECO:0000250" key="3">
    <source>
        <dbReference type="UniProtKB" id="P62897"/>
    </source>
</evidence>
<evidence type="ECO:0000269" key="4">
    <source>
    </source>
</evidence>
<evidence type="ECO:0000305" key="5"/>
<protein>
    <recommendedName>
        <fullName>Cytochrome c</fullName>
    </recommendedName>
</protein>
<sequence length="105" mass="11749">MGDVEKGKKIFIMKCSQCHTVEKGGKHKTGPNLHGLFGRKTGQAPGYSYTAANKNKGIIWGEDTLMEYLENPKKYIPGTKMIFVGIKKKEERADLIAYLKKATNE</sequence>